<organism>
    <name type="scientific">Anaeromyxobacter sp. (strain K)</name>
    <dbReference type="NCBI Taxonomy" id="447217"/>
    <lineage>
        <taxon>Bacteria</taxon>
        <taxon>Pseudomonadati</taxon>
        <taxon>Myxococcota</taxon>
        <taxon>Myxococcia</taxon>
        <taxon>Myxococcales</taxon>
        <taxon>Cystobacterineae</taxon>
        <taxon>Anaeromyxobacteraceae</taxon>
        <taxon>Anaeromyxobacter</taxon>
    </lineage>
</organism>
<proteinExistence type="inferred from homology"/>
<sequence length="370" mass="37321">MPARPIPVPLLALALAAALAVPSPAAAARVKELADVVGVRENALYGYGLVVGLAGTGDSERVLFTQQSVAGMLGRLGIRIDPKDVRARNVAAVMVTARLPPFARPGTRIDVAVASMGNARSLAGGLLLVTPLAGGDGKVYAVGQGPVQVAGYDAGAGGAELRKNTPTSGRVAGGAAVERAVDFALGQAPLVLALRRPDLTTASRLAAAVNAKLGAGTARAVDPAAVELSPPAARKDDVVGFLAEIELLEVEADQRARVVVSERTGTVVAGEGVRLRPVAVAHGGLQVRVQRDPAVSQPAPFGAGRTVEATRDRAAATEAAGGVVALPATASVQDLARALDLLGASPRDLVAVLEAIRAAGALDAELEVLE</sequence>
<protein>
    <recommendedName>
        <fullName evidence="1">Flagellar P-ring protein</fullName>
    </recommendedName>
    <alternativeName>
        <fullName evidence="1">Basal body P-ring protein</fullName>
    </alternativeName>
</protein>
<reference key="1">
    <citation type="submission" date="2008-08" db="EMBL/GenBank/DDBJ databases">
        <title>Complete sequence of Anaeromyxobacter sp. K.</title>
        <authorList>
            <consortium name="US DOE Joint Genome Institute"/>
            <person name="Lucas S."/>
            <person name="Copeland A."/>
            <person name="Lapidus A."/>
            <person name="Glavina del Rio T."/>
            <person name="Dalin E."/>
            <person name="Tice H."/>
            <person name="Bruce D."/>
            <person name="Goodwin L."/>
            <person name="Pitluck S."/>
            <person name="Saunders E."/>
            <person name="Brettin T."/>
            <person name="Detter J.C."/>
            <person name="Han C."/>
            <person name="Larimer F."/>
            <person name="Land M."/>
            <person name="Hauser L."/>
            <person name="Kyrpides N."/>
            <person name="Ovchinnikiva G."/>
            <person name="Beliaev A."/>
        </authorList>
    </citation>
    <scope>NUCLEOTIDE SEQUENCE [LARGE SCALE GENOMIC DNA]</scope>
    <source>
        <strain>K</strain>
    </source>
</reference>
<name>FLGI_ANASK</name>
<accession>B4UG42</accession>
<gene>
    <name evidence="1" type="primary">flgI</name>
    <name type="ordered locus">AnaeK_2509</name>
</gene>
<keyword id="KW-0975">Bacterial flagellum</keyword>
<keyword id="KW-0574">Periplasm</keyword>
<keyword id="KW-0732">Signal</keyword>
<evidence type="ECO:0000255" key="1">
    <source>
        <dbReference type="HAMAP-Rule" id="MF_00416"/>
    </source>
</evidence>
<dbReference type="EMBL" id="CP001131">
    <property type="protein sequence ID" value="ACG73734.1"/>
    <property type="molecule type" value="Genomic_DNA"/>
</dbReference>
<dbReference type="RefSeq" id="WP_012526520.1">
    <property type="nucleotide sequence ID" value="NC_011145.1"/>
</dbReference>
<dbReference type="SMR" id="B4UG42"/>
<dbReference type="KEGG" id="ank:AnaeK_2509"/>
<dbReference type="HOGENOM" id="CLU_045235_1_0_7"/>
<dbReference type="OrthoDB" id="9786431at2"/>
<dbReference type="Proteomes" id="UP000001871">
    <property type="component" value="Chromosome"/>
</dbReference>
<dbReference type="GO" id="GO:0009428">
    <property type="term" value="C:bacterial-type flagellum basal body, distal rod, P ring"/>
    <property type="evidence" value="ECO:0007669"/>
    <property type="project" value="InterPro"/>
</dbReference>
<dbReference type="GO" id="GO:0030288">
    <property type="term" value="C:outer membrane-bounded periplasmic space"/>
    <property type="evidence" value="ECO:0007669"/>
    <property type="project" value="InterPro"/>
</dbReference>
<dbReference type="GO" id="GO:0005198">
    <property type="term" value="F:structural molecule activity"/>
    <property type="evidence" value="ECO:0007669"/>
    <property type="project" value="InterPro"/>
</dbReference>
<dbReference type="GO" id="GO:0071973">
    <property type="term" value="P:bacterial-type flagellum-dependent cell motility"/>
    <property type="evidence" value="ECO:0007669"/>
    <property type="project" value="InterPro"/>
</dbReference>
<dbReference type="HAMAP" id="MF_00416">
    <property type="entry name" value="FlgI"/>
    <property type="match status" value="1"/>
</dbReference>
<dbReference type="InterPro" id="IPR001782">
    <property type="entry name" value="Flag_FlgI"/>
</dbReference>
<dbReference type="NCBIfam" id="NF003676">
    <property type="entry name" value="PRK05303.1"/>
    <property type="match status" value="1"/>
</dbReference>
<dbReference type="PANTHER" id="PTHR30381">
    <property type="entry name" value="FLAGELLAR P-RING PERIPLASMIC PROTEIN FLGI"/>
    <property type="match status" value="1"/>
</dbReference>
<dbReference type="PANTHER" id="PTHR30381:SF0">
    <property type="entry name" value="FLAGELLAR P-RING PROTEIN"/>
    <property type="match status" value="1"/>
</dbReference>
<dbReference type="Pfam" id="PF02119">
    <property type="entry name" value="FlgI"/>
    <property type="match status" value="1"/>
</dbReference>
<dbReference type="PRINTS" id="PR01010">
    <property type="entry name" value="FLGPRINGFLGI"/>
</dbReference>
<comment type="function">
    <text evidence="1">Assembles around the rod to form the L-ring and probably protects the motor/basal body from shearing forces during rotation.</text>
</comment>
<comment type="subunit">
    <text evidence="1">The basal body constitutes a major portion of the flagellar organelle and consists of four rings (L,P,S, and M) mounted on a central rod.</text>
</comment>
<comment type="subcellular location">
    <subcellularLocation>
        <location evidence="1">Periplasm</location>
    </subcellularLocation>
    <subcellularLocation>
        <location evidence="1">Bacterial flagellum basal body</location>
    </subcellularLocation>
</comment>
<comment type="similarity">
    <text evidence="1">Belongs to the FlgI family.</text>
</comment>
<feature type="signal peptide" evidence="1">
    <location>
        <begin position="1"/>
        <end position="27"/>
    </location>
</feature>
<feature type="chain" id="PRO_5000390577" description="Flagellar P-ring protein">
    <location>
        <begin position="28"/>
        <end position="370"/>
    </location>
</feature>